<sequence length="120" mass="12797">MADSALELDDFLSRFQLLRPQPHAPPLNQRQAAVLVPIVRRPQPGLLLTQRSPLMRKHAGQVAFPGGAVDNSDATLIAAALREAQEEVAIPPESVEVIGVLPPVDSVTGFQVTPVVGIIP</sequence>
<accession>P43338</accession>
<dbReference type="EC" id="3.6.1.-"/>
<dbReference type="EMBL" id="M22078">
    <property type="protein sequence ID" value="AAA88208.1"/>
    <property type="molecule type" value="Genomic_DNA"/>
</dbReference>
<dbReference type="SMR" id="P43338"/>
<dbReference type="STRING" id="548.EAG7_00980"/>
<dbReference type="GO" id="GO:0010945">
    <property type="term" value="F:coenzyme A diphosphatase activity"/>
    <property type="evidence" value="ECO:0007669"/>
    <property type="project" value="InterPro"/>
</dbReference>
<dbReference type="GO" id="GO:0000287">
    <property type="term" value="F:magnesium ion binding"/>
    <property type="evidence" value="ECO:0007669"/>
    <property type="project" value="InterPro"/>
</dbReference>
<dbReference type="GO" id="GO:0030145">
    <property type="term" value="F:manganese ion binding"/>
    <property type="evidence" value="ECO:0007669"/>
    <property type="project" value="InterPro"/>
</dbReference>
<dbReference type="GO" id="GO:0009132">
    <property type="term" value="P:nucleoside diphosphate metabolic process"/>
    <property type="evidence" value="ECO:0007669"/>
    <property type="project" value="InterPro"/>
</dbReference>
<dbReference type="CDD" id="cd03426">
    <property type="entry name" value="NUDIX_CoAse_Nudt7"/>
    <property type="match status" value="1"/>
</dbReference>
<dbReference type="Gene3D" id="3.90.79.10">
    <property type="entry name" value="Nucleoside Triphosphate Pyrophosphohydrolase"/>
    <property type="match status" value="1"/>
</dbReference>
<dbReference type="InterPro" id="IPR045121">
    <property type="entry name" value="CoAse"/>
</dbReference>
<dbReference type="InterPro" id="IPR015797">
    <property type="entry name" value="NUDIX_hydrolase-like_dom_sf"/>
</dbReference>
<dbReference type="InterPro" id="IPR000086">
    <property type="entry name" value="NUDIX_hydrolase_dom"/>
</dbReference>
<dbReference type="InterPro" id="IPR000059">
    <property type="entry name" value="NUDIX_hydrolase_NudL_CS"/>
</dbReference>
<dbReference type="NCBIfam" id="NF007980">
    <property type="entry name" value="PRK10707.1"/>
    <property type="match status" value="1"/>
</dbReference>
<dbReference type="PANTHER" id="PTHR12992:SF11">
    <property type="entry name" value="MITOCHONDRIAL COENZYME A DIPHOSPHATASE NUDT8"/>
    <property type="match status" value="1"/>
</dbReference>
<dbReference type="PANTHER" id="PTHR12992">
    <property type="entry name" value="NUDIX HYDROLASE"/>
    <property type="match status" value="1"/>
</dbReference>
<dbReference type="Pfam" id="PF00293">
    <property type="entry name" value="NUDIX"/>
    <property type="match status" value="1"/>
</dbReference>
<dbReference type="SUPFAM" id="SSF55811">
    <property type="entry name" value="Nudix"/>
    <property type="match status" value="1"/>
</dbReference>
<dbReference type="PROSITE" id="PS51462">
    <property type="entry name" value="NUDIX"/>
    <property type="match status" value="1"/>
</dbReference>
<dbReference type="PROSITE" id="PS01293">
    <property type="entry name" value="NUDIX_COA"/>
    <property type="match status" value="1"/>
</dbReference>
<proteinExistence type="inferred from homology"/>
<name>NUDL_KLEAE</name>
<evidence type="ECO:0000250" key="1"/>
<evidence type="ECO:0000255" key="2">
    <source>
        <dbReference type="PROSITE-ProRule" id="PRU00794"/>
    </source>
</evidence>
<evidence type="ECO:0000305" key="3"/>
<protein>
    <recommendedName>
        <fullName>Uncharacterized Nudix hydrolase NudL</fullName>
        <ecNumber>3.6.1.-</ecNumber>
    </recommendedName>
</protein>
<feature type="chain" id="PRO_0000057146" description="Uncharacterized Nudix hydrolase NudL">
    <location>
        <begin position="1"/>
        <end position="120" status="greater than"/>
    </location>
</feature>
<feature type="domain" description="Nudix hydrolase" evidence="2">
    <location>
        <begin position="29"/>
        <end position="120"/>
    </location>
</feature>
<feature type="short sequence motif" description="Nudix box">
    <location>
        <begin position="67"/>
        <end position="89"/>
    </location>
</feature>
<feature type="binding site" evidence="1">
    <location>
        <position position="83"/>
    </location>
    <ligand>
        <name>Mg(2+)</name>
        <dbReference type="ChEBI" id="CHEBI:18420"/>
    </ligand>
</feature>
<feature type="binding site" evidence="1">
    <location>
        <position position="87"/>
    </location>
    <ligand>
        <name>Mg(2+)</name>
        <dbReference type="ChEBI" id="CHEBI:18420"/>
    </ligand>
</feature>
<feature type="non-terminal residue">
    <location>
        <position position="120"/>
    </location>
</feature>
<comment type="function">
    <text evidence="1">Probably mediates the hydrolysis of some nucleoside diphosphate derivatives.</text>
</comment>
<comment type="cofactor">
    <cofactor evidence="1">
        <name>Mn(2+)</name>
        <dbReference type="ChEBI" id="CHEBI:29035"/>
    </cofactor>
    <cofactor evidence="1">
        <name>Mg(2+)</name>
        <dbReference type="ChEBI" id="CHEBI:18420"/>
    </cofactor>
</comment>
<comment type="similarity">
    <text evidence="3">Belongs to the Nudix hydrolase family. PCD1 subfamily.</text>
</comment>
<organism>
    <name type="scientific">Klebsiella aerogenes</name>
    <name type="common">Enterobacter aerogenes</name>
    <dbReference type="NCBI Taxonomy" id="548"/>
    <lineage>
        <taxon>Bacteria</taxon>
        <taxon>Pseudomonadati</taxon>
        <taxon>Pseudomonadota</taxon>
        <taxon>Gammaproteobacteria</taxon>
        <taxon>Enterobacterales</taxon>
        <taxon>Enterobacteriaceae</taxon>
        <taxon>Klebsiella/Raoultella group</taxon>
        <taxon>Klebsiella</taxon>
    </lineage>
</organism>
<gene>
    <name type="primary">nudL</name>
</gene>
<reference key="1">
    <citation type="journal article" date="1988" name="Mol. Biol. Evol.">
        <title>Evolution of aminobenzoate synthases: nucleotide sequences of Salmonella typhimurium and Klebsiella aerogenes pabB.</title>
        <authorList>
            <person name="Goncharoff P."/>
            <person name="Nichols B.P."/>
        </authorList>
    </citation>
    <scope>NUCLEOTIDE SEQUENCE [GENOMIC DNA]</scope>
</reference>
<reference key="2">
    <citation type="journal article" date="1995" name="Nucleic Acids Res.">
        <title>Detection of new genes in a bacterial genome using Markov models for three gene classes.</title>
        <authorList>
            <person name="Borodovsky M."/>
            <person name="McIninch J."/>
            <person name="Koonin E.V."/>
            <person name="Rudd K.E."/>
            <person name="Medigue C."/>
            <person name="Danchin A."/>
        </authorList>
    </citation>
    <scope>IDENTIFICATION</scope>
</reference>
<keyword id="KW-0378">Hydrolase</keyword>
<keyword id="KW-0460">Magnesium</keyword>
<keyword id="KW-0464">Manganese</keyword>
<keyword id="KW-0479">Metal-binding</keyword>